<feature type="chain" id="PRO_0000393756" description="TNF receptor-associated factor family protein DDB_G0267744">
    <location>
        <begin position="1"/>
        <end position="429"/>
    </location>
</feature>
<feature type="zinc finger region" description="RING-type; degenerate">
    <location>
        <begin position="22"/>
        <end position="60"/>
    </location>
</feature>
<feature type="zinc finger region" description="TRAF-type 1" evidence="2">
    <location>
        <begin position="151"/>
        <end position="203"/>
    </location>
</feature>
<feature type="zinc finger region" description="TRAF-type 2" evidence="2">
    <location>
        <begin position="204"/>
        <end position="265"/>
    </location>
</feature>
<organism>
    <name type="scientific">Dictyostelium discoideum</name>
    <name type="common">Social amoeba</name>
    <dbReference type="NCBI Taxonomy" id="44689"/>
    <lineage>
        <taxon>Eukaryota</taxon>
        <taxon>Amoebozoa</taxon>
        <taxon>Evosea</taxon>
        <taxon>Eumycetozoa</taxon>
        <taxon>Dictyostelia</taxon>
        <taxon>Dictyosteliales</taxon>
        <taxon>Dictyosteliaceae</taxon>
        <taxon>Dictyostelium</taxon>
    </lineage>
</organism>
<sequence length="429" mass="50098">MEISDILFDDLVVGEINDDFICVICSHLQVDIYQCVEGHFACKNCFLKMIELKKQCMTCRCEIKSIESLSKNRYLEKEVRKLNIYCPNSFSDLKNSIKDENACKDIITIEGLETHLKNCKFTLKECPNNKNCNDDNKNKECLKIRQGEFDHHLKECPNSLIKCEHCSIEITRSKQTDHIENHCLKVLKQCEFCFKLIERGEFNNHQDTICLSKLIKCPFNEGGCVDLVKRSDIKEHLSVLAGEHLLYSITMINSLSLKLEKSNSELQESISYSRLLKKDFKELKKSKSYSGRWVIEKWSEKLKQYGKGQSIQFQKFNTSTSPSSAFSYFTLRLFPNGQYNGETISIHLVKLFRNKSRISFSFEIENHINPSSNEEIDSRFLFGNLNDYYSTIFYKEYNKENGFISEDDTLVIHFNVEILKYYDDTFITK</sequence>
<keyword id="KW-0963">Cytoplasm</keyword>
<keyword id="KW-0479">Metal-binding</keyword>
<keyword id="KW-1185">Reference proteome</keyword>
<keyword id="KW-0677">Repeat</keyword>
<keyword id="KW-0862">Zinc</keyword>
<keyword id="KW-0863">Zinc-finger</keyword>
<comment type="function">
    <text evidence="1">Probable adapter protein and signal transducer that links members of the tumor necrosis factor receptor family to different signaling pathways by association with the receptor cytoplasmic domain and kinases.</text>
</comment>
<comment type="subcellular location">
    <subcellularLocation>
        <location evidence="1">Cytoplasm</location>
    </subcellularLocation>
</comment>
<comment type="domain">
    <text>The MATH/TRAF domain binds to receptor cytoplasmic domains.</text>
</comment>
<comment type="similarity">
    <text evidence="3">Belongs to the TNF receptor-associated factor family.</text>
</comment>
<protein>
    <recommendedName>
        <fullName>TNF receptor-associated factor family protein DDB_G0267744</fullName>
    </recommendedName>
</protein>
<dbReference type="EMBL" id="AAFI02000003">
    <property type="protein sequence ID" value="EAL73325.1"/>
    <property type="molecule type" value="Genomic_DNA"/>
</dbReference>
<dbReference type="RefSeq" id="XP_647276.1">
    <property type="nucleotide sequence ID" value="XM_642184.1"/>
</dbReference>
<dbReference type="SMR" id="Q55GA8"/>
<dbReference type="FunCoup" id="Q55GA8">
    <property type="interactions" value="11"/>
</dbReference>
<dbReference type="STRING" id="44689.Q55GA8"/>
<dbReference type="PaxDb" id="44689-DDB0189514"/>
<dbReference type="EnsemblProtists" id="EAL73325">
    <property type="protein sequence ID" value="EAL73325"/>
    <property type="gene ID" value="DDB_G0267744"/>
</dbReference>
<dbReference type="GeneID" id="8616083"/>
<dbReference type="KEGG" id="ddi:DDB_G0267744"/>
<dbReference type="dictyBase" id="DDB_G0267744"/>
<dbReference type="VEuPathDB" id="AmoebaDB:DDB_G0267744"/>
<dbReference type="eggNOG" id="KOG0297">
    <property type="taxonomic scope" value="Eukaryota"/>
</dbReference>
<dbReference type="HOGENOM" id="CLU_040980_0_0_1"/>
<dbReference type="InParanoid" id="Q55GA8"/>
<dbReference type="OMA" id="FLCDTIQ"/>
<dbReference type="PhylomeDB" id="Q55GA8"/>
<dbReference type="PRO" id="PR:Q55GA8"/>
<dbReference type="Proteomes" id="UP000002195">
    <property type="component" value="Chromosome 1"/>
</dbReference>
<dbReference type="GO" id="GO:0005737">
    <property type="term" value="C:cytoplasm"/>
    <property type="evidence" value="ECO:0000318"/>
    <property type="project" value="GO_Central"/>
</dbReference>
<dbReference type="GO" id="GO:0008270">
    <property type="term" value="F:zinc ion binding"/>
    <property type="evidence" value="ECO:0007669"/>
    <property type="project" value="UniProtKB-KW"/>
</dbReference>
<dbReference type="Gene3D" id="3.30.40.10">
    <property type="entry name" value="Zinc/RING finger domain, C3HC4 (zinc finger)"/>
    <property type="match status" value="3"/>
</dbReference>
<dbReference type="InterPro" id="IPR013083">
    <property type="entry name" value="Znf_RING/FYVE/PHD"/>
</dbReference>
<dbReference type="InterPro" id="IPR001293">
    <property type="entry name" value="Znf_TRAF"/>
</dbReference>
<dbReference type="PANTHER" id="PTHR10131:SF156">
    <property type="entry name" value="RING-TYPE DOMAIN-CONTAINING PROTEIN-RELATED"/>
    <property type="match status" value="1"/>
</dbReference>
<dbReference type="PANTHER" id="PTHR10131">
    <property type="entry name" value="TNF RECEPTOR ASSOCIATED FACTOR"/>
    <property type="match status" value="1"/>
</dbReference>
<dbReference type="Pfam" id="PF02176">
    <property type="entry name" value="zf-TRAF"/>
    <property type="match status" value="1"/>
</dbReference>
<dbReference type="SUPFAM" id="SSF57850">
    <property type="entry name" value="RING/U-box"/>
    <property type="match status" value="1"/>
</dbReference>
<dbReference type="SUPFAM" id="SSF49599">
    <property type="entry name" value="TRAF domain-like"/>
    <property type="match status" value="3"/>
</dbReference>
<dbReference type="PROSITE" id="PS50145">
    <property type="entry name" value="ZF_TRAF"/>
    <property type="match status" value="1"/>
</dbReference>
<accession>Q55GA8</accession>
<name>Y7744_DICDI</name>
<evidence type="ECO:0000250" key="1"/>
<evidence type="ECO:0000255" key="2">
    <source>
        <dbReference type="PROSITE-ProRule" id="PRU00207"/>
    </source>
</evidence>
<evidence type="ECO:0000305" key="3"/>
<proteinExistence type="inferred from homology"/>
<gene>
    <name type="ORF">DDB_G0267744</name>
</gene>
<reference key="1">
    <citation type="journal article" date="2005" name="Nature">
        <title>The genome of the social amoeba Dictyostelium discoideum.</title>
        <authorList>
            <person name="Eichinger L."/>
            <person name="Pachebat J.A."/>
            <person name="Gloeckner G."/>
            <person name="Rajandream M.A."/>
            <person name="Sucgang R."/>
            <person name="Berriman M."/>
            <person name="Song J."/>
            <person name="Olsen R."/>
            <person name="Szafranski K."/>
            <person name="Xu Q."/>
            <person name="Tunggal B."/>
            <person name="Kummerfeld S."/>
            <person name="Madera M."/>
            <person name="Konfortov B.A."/>
            <person name="Rivero F."/>
            <person name="Bankier A.T."/>
            <person name="Lehmann R."/>
            <person name="Hamlin N."/>
            <person name="Davies R."/>
            <person name="Gaudet P."/>
            <person name="Fey P."/>
            <person name="Pilcher K."/>
            <person name="Chen G."/>
            <person name="Saunders D."/>
            <person name="Sodergren E.J."/>
            <person name="Davis P."/>
            <person name="Kerhornou A."/>
            <person name="Nie X."/>
            <person name="Hall N."/>
            <person name="Anjard C."/>
            <person name="Hemphill L."/>
            <person name="Bason N."/>
            <person name="Farbrother P."/>
            <person name="Desany B."/>
            <person name="Just E."/>
            <person name="Morio T."/>
            <person name="Rost R."/>
            <person name="Churcher C.M."/>
            <person name="Cooper J."/>
            <person name="Haydock S."/>
            <person name="van Driessche N."/>
            <person name="Cronin A."/>
            <person name="Goodhead I."/>
            <person name="Muzny D.M."/>
            <person name="Mourier T."/>
            <person name="Pain A."/>
            <person name="Lu M."/>
            <person name="Harper D."/>
            <person name="Lindsay R."/>
            <person name="Hauser H."/>
            <person name="James K.D."/>
            <person name="Quiles M."/>
            <person name="Madan Babu M."/>
            <person name="Saito T."/>
            <person name="Buchrieser C."/>
            <person name="Wardroper A."/>
            <person name="Felder M."/>
            <person name="Thangavelu M."/>
            <person name="Johnson D."/>
            <person name="Knights A."/>
            <person name="Loulseged H."/>
            <person name="Mungall K.L."/>
            <person name="Oliver K."/>
            <person name="Price C."/>
            <person name="Quail M.A."/>
            <person name="Urushihara H."/>
            <person name="Hernandez J."/>
            <person name="Rabbinowitsch E."/>
            <person name="Steffen D."/>
            <person name="Sanders M."/>
            <person name="Ma J."/>
            <person name="Kohara Y."/>
            <person name="Sharp S."/>
            <person name="Simmonds M.N."/>
            <person name="Spiegler S."/>
            <person name="Tivey A."/>
            <person name="Sugano S."/>
            <person name="White B."/>
            <person name="Walker D."/>
            <person name="Woodward J.R."/>
            <person name="Winckler T."/>
            <person name="Tanaka Y."/>
            <person name="Shaulsky G."/>
            <person name="Schleicher M."/>
            <person name="Weinstock G.M."/>
            <person name="Rosenthal A."/>
            <person name="Cox E.C."/>
            <person name="Chisholm R.L."/>
            <person name="Gibbs R.A."/>
            <person name="Loomis W.F."/>
            <person name="Platzer M."/>
            <person name="Kay R.R."/>
            <person name="Williams J.G."/>
            <person name="Dear P.H."/>
            <person name="Noegel A.A."/>
            <person name="Barrell B.G."/>
            <person name="Kuspa A."/>
        </authorList>
    </citation>
    <scope>NUCLEOTIDE SEQUENCE [LARGE SCALE GENOMIC DNA]</scope>
    <source>
        <strain>AX4</strain>
    </source>
</reference>